<evidence type="ECO:0000255" key="1">
    <source>
        <dbReference type="HAMAP-Rule" id="MF_00014"/>
    </source>
</evidence>
<dbReference type="EMBL" id="CP000606">
    <property type="protein sequence ID" value="ABO22935.1"/>
    <property type="molecule type" value="Genomic_DNA"/>
</dbReference>
<dbReference type="RefSeq" id="WP_011864868.1">
    <property type="nucleotide sequence ID" value="NC_009092.1"/>
</dbReference>
<dbReference type="SMR" id="A3QBT7"/>
<dbReference type="STRING" id="323850.Shew_1064"/>
<dbReference type="KEGG" id="slo:Shew_1064"/>
<dbReference type="eggNOG" id="COG0806">
    <property type="taxonomic scope" value="Bacteria"/>
</dbReference>
<dbReference type="HOGENOM" id="CLU_077636_1_0_6"/>
<dbReference type="OrthoDB" id="9783509at2"/>
<dbReference type="Proteomes" id="UP000001558">
    <property type="component" value="Chromosome"/>
</dbReference>
<dbReference type="GO" id="GO:0005737">
    <property type="term" value="C:cytoplasm"/>
    <property type="evidence" value="ECO:0007669"/>
    <property type="project" value="UniProtKB-SubCell"/>
</dbReference>
<dbReference type="GO" id="GO:0005840">
    <property type="term" value="C:ribosome"/>
    <property type="evidence" value="ECO:0007669"/>
    <property type="project" value="InterPro"/>
</dbReference>
<dbReference type="GO" id="GO:0043022">
    <property type="term" value="F:ribosome binding"/>
    <property type="evidence" value="ECO:0007669"/>
    <property type="project" value="InterPro"/>
</dbReference>
<dbReference type="GO" id="GO:0042274">
    <property type="term" value="P:ribosomal small subunit biogenesis"/>
    <property type="evidence" value="ECO:0007669"/>
    <property type="project" value="UniProtKB-UniRule"/>
</dbReference>
<dbReference type="GO" id="GO:0006364">
    <property type="term" value="P:rRNA processing"/>
    <property type="evidence" value="ECO:0007669"/>
    <property type="project" value="UniProtKB-UniRule"/>
</dbReference>
<dbReference type="Gene3D" id="2.30.30.240">
    <property type="entry name" value="PRC-barrel domain"/>
    <property type="match status" value="1"/>
</dbReference>
<dbReference type="Gene3D" id="2.40.30.60">
    <property type="entry name" value="RimM"/>
    <property type="match status" value="1"/>
</dbReference>
<dbReference type="HAMAP" id="MF_00014">
    <property type="entry name" value="Ribosome_mat_RimM"/>
    <property type="match status" value="1"/>
</dbReference>
<dbReference type="InterPro" id="IPR011033">
    <property type="entry name" value="PRC_barrel-like_sf"/>
</dbReference>
<dbReference type="InterPro" id="IPR056792">
    <property type="entry name" value="PRC_RimM"/>
</dbReference>
<dbReference type="InterPro" id="IPR011961">
    <property type="entry name" value="RimM"/>
</dbReference>
<dbReference type="InterPro" id="IPR002676">
    <property type="entry name" value="RimM_N"/>
</dbReference>
<dbReference type="InterPro" id="IPR036976">
    <property type="entry name" value="RimM_N_sf"/>
</dbReference>
<dbReference type="InterPro" id="IPR009000">
    <property type="entry name" value="Transl_B-barrel_sf"/>
</dbReference>
<dbReference type="NCBIfam" id="TIGR02273">
    <property type="entry name" value="16S_RimM"/>
    <property type="match status" value="1"/>
</dbReference>
<dbReference type="PANTHER" id="PTHR33692">
    <property type="entry name" value="RIBOSOME MATURATION FACTOR RIMM"/>
    <property type="match status" value="1"/>
</dbReference>
<dbReference type="PANTHER" id="PTHR33692:SF1">
    <property type="entry name" value="RIBOSOME MATURATION FACTOR RIMM"/>
    <property type="match status" value="1"/>
</dbReference>
<dbReference type="Pfam" id="PF24986">
    <property type="entry name" value="PRC_RimM"/>
    <property type="match status" value="1"/>
</dbReference>
<dbReference type="Pfam" id="PF01782">
    <property type="entry name" value="RimM"/>
    <property type="match status" value="1"/>
</dbReference>
<dbReference type="SUPFAM" id="SSF50346">
    <property type="entry name" value="PRC-barrel domain"/>
    <property type="match status" value="1"/>
</dbReference>
<dbReference type="SUPFAM" id="SSF50447">
    <property type="entry name" value="Translation proteins"/>
    <property type="match status" value="1"/>
</dbReference>
<keyword id="KW-0143">Chaperone</keyword>
<keyword id="KW-0963">Cytoplasm</keyword>
<keyword id="KW-1185">Reference proteome</keyword>
<keyword id="KW-0690">Ribosome biogenesis</keyword>
<keyword id="KW-0698">rRNA processing</keyword>
<organism>
    <name type="scientific">Shewanella loihica (strain ATCC BAA-1088 / PV-4)</name>
    <dbReference type="NCBI Taxonomy" id="323850"/>
    <lineage>
        <taxon>Bacteria</taxon>
        <taxon>Pseudomonadati</taxon>
        <taxon>Pseudomonadota</taxon>
        <taxon>Gammaproteobacteria</taxon>
        <taxon>Alteromonadales</taxon>
        <taxon>Shewanellaceae</taxon>
        <taxon>Shewanella</taxon>
    </lineage>
</organism>
<proteinExistence type="inferred from homology"/>
<protein>
    <recommendedName>
        <fullName evidence="1">Ribosome maturation factor RimM</fullName>
    </recommendedName>
</protein>
<accession>A3QBT7</accession>
<reference key="1">
    <citation type="submission" date="2007-03" db="EMBL/GenBank/DDBJ databases">
        <title>Complete sequence of Shewanella loihica PV-4.</title>
        <authorList>
            <consortium name="US DOE Joint Genome Institute"/>
            <person name="Copeland A."/>
            <person name="Lucas S."/>
            <person name="Lapidus A."/>
            <person name="Barry K."/>
            <person name="Detter J.C."/>
            <person name="Glavina del Rio T."/>
            <person name="Hammon N."/>
            <person name="Israni S."/>
            <person name="Dalin E."/>
            <person name="Tice H."/>
            <person name="Pitluck S."/>
            <person name="Chain P."/>
            <person name="Malfatti S."/>
            <person name="Shin M."/>
            <person name="Vergez L."/>
            <person name="Schmutz J."/>
            <person name="Larimer F."/>
            <person name="Land M."/>
            <person name="Hauser L."/>
            <person name="Kyrpides N."/>
            <person name="Mikhailova N."/>
            <person name="Romine M.F."/>
            <person name="Serres G."/>
            <person name="Fredrickson J."/>
            <person name="Tiedje J."/>
            <person name="Richardson P."/>
        </authorList>
    </citation>
    <scope>NUCLEOTIDE SEQUENCE [LARGE SCALE GENOMIC DNA]</scope>
    <source>
        <strain>ATCC BAA-1088 / PV-4</strain>
    </source>
</reference>
<gene>
    <name evidence="1" type="primary">rimM</name>
    <name type="ordered locus">Shew_1064</name>
</gene>
<name>RIMM_SHELP</name>
<sequence>MSSHQEPVVLGKLGASHGIKGWLKITSYTDSVEDIFDYSPWLIKEQGEWREVKVAQWRYQGKAIIAALEGVTTRDQAQMLTNCEIAIPAEAMKALPEDEFYWRDLIGCEVVNTKGYKMGKVDQIVETGSNDVLLVKANAKDGFGKTERMIPFVTEQFILEVNLAEKQILVDWDPDF</sequence>
<feature type="chain" id="PRO_0000321757" description="Ribosome maturation factor RimM">
    <location>
        <begin position="1"/>
        <end position="176"/>
    </location>
</feature>
<feature type="domain" description="PRC barrel" evidence="1">
    <location>
        <begin position="97"/>
        <end position="176"/>
    </location>
</feature>
<comment type="function">
    <text evidence="1">An accessory protein needed during the final step in the assembly of 30S ribosomal subunit, possibly for assembly of the head region. Essential for efficient processing of 16S rRNA. May be needed both before and after RbfA during the maturation of 16S rRNA. It has affinity for free ribosomal 30S subunits but not for 70S ribosomes.</text>
</comment>
<comment type="subunit">
    <text evidence="1">Binds ribosomal protein uS19.</text>
</comment>
<comment type="subcellular location">
    <subcellularLocation>
        <location evidence="1">Cytoplasm</location>
    </subcellularLocation>
</comment>
<comment type="domain">
    <text evidence="1">The PRC barrel domain binds ribosomal protein uS19.</text>
</comment>
<comment type="similarity">
    <text evidence="1">Belongs to the RimM family.</text>
</comment>